<comment type="function">
    <text evidence="1">Participates in processes of transmission and amplification of the visual signal. cGMP-PDEs are the effector molecules in G-protein-mediated phototransduction in vertebrate rods and cones (By similarity).</text>
</comment>
<comment type="catalytic activity">
    <reaction>
        <text>3',5'-cyclic GMP + H2O = GMP + H(+)</text>
        <dbReference type="Rhea" id="RHEA:16957"/>
        <dbReference type="ChEBI" id="CHEBI:15377"/>
        <dbReference type="ChEBI" id="CHEBI:15378"/>
        <dbReference type="ChEBI" id="CHEBI:57746"/>
        <dbReference type="ChEBI" id="CHEBI:58115"/>
        <dbReference type="EC" id="3.1.4.35"/>
    </reaction>
</comment>
<comment type="subunit">
    <text evidence="1">Oligomer composed of two catalytic chains (alpha and beta), an inhibitory chain (gamma) and the delta chain.</text>
</comment>
<comment type="similarity">
    <text evidence="4">Belongs to the rod/cone cGMP-PDE gamma subunit family.</text>
</comment>
<reference key="1">
    <citation type="submission" date="1999-03" db="EMBL/GenBank/DDBJ databases">
        <title>Molecular cloning and characterization of an airway smooth muscle cyclic-GMP phosphodiesterase 6 gamma-subunit.</title>
        <authorList>
            <person name="Tate R.J."/>
            <person name="Pyne N.J."/>
        </authorList>
    </citation>
    <scope>NUCLEOTIDE SEQUENCE [MRNA]</scope>
    <source>
        <tissue>Airway smooth muscle</tissue>
    </source>
</reference>
<proteinExistence type="inferred from homology"/>
<organism>
    <name type="scientific">Cavia porcellus</name>
    <name type="common">Guinea pig</name>
    <dbReference type="NCBI Taxonomy" id="10141"/>
    <lineage>
        <taxon>Eukaryota</taxon>
        <taxon>Metazoa</taxon>
        <taxon>Chordata</taxon>
        <taxon>Craniata</taxon>
        <taxon>Vertebrata</taxon>
        <taxon>Euteleostomi</taxon>
        <taxon>Mammalia</taxon>
        <taxon>Eutheria</taxon>
        <taxon>Euarchontoglires</taxon>
        <taxon>Glires</taxon>
        <taxon>Rodentia</taxon>
        <taxon>Hystricomorpha</taxon>
        <taxon>Caviidae</taxon>
        <taxon>Cavia</taxon>
    </lineage>
</organism>
<sequence>MNLELPKAEIRSATRVVGGPVTPRKGPPKFKQRQTRQFKSKPPKKGVQGFGDDIPGMEGLGTDITVICPWEAFNHLELHELAQYGII</sequence>
<gene>
    <name type="primary">PDE6G</name>
</gene>
<accession>Q9EQQ8</accession>
<name>CNRG_CAVPO</name>
<keyword id="KW-0007">Acetylation</keyword>
<keyword id="KW-0140">cGMP</keyword>
<keyword id="KW-0378">Hydrolase</keyword>
<keyword id="KW-1185">Reference proteome</keyword>
<keyword id="KW-0716">Sensory transduction</keyword>
<keyword id="KW-0844">Vision</keyword>
<evidence type="ECO:0000250" key="1"/>
<evidence type="ECO:0000250" key="2">
    <source>
        <dbReference type="UniProtKB" id="P04972"/>
    </source>
</evidence>
<evidence type="ECO:0000256" key="3">
    <source>
        <dbReference type="SAM" id="MobiDB-lite"/>
    </source>
</evidence>
<evidence type="ECO:0000305" key="4"/>
<feature type="chain" id="PRO_0000166115" description="Retinal rod rhodopsin-sensitive cGMP 3',5'-cyclic phosphodiesterase subunit gamma">
    <location>
        <begin position="1"/>
        <end position="87"/>
    </location>
</feature>
<feature type="region of interest" description="Disordered" evidence="3">
    <location>
        <begin position="16"/>
        <end position="54"/>
    </location>
</feature>
<feature type="compositionally biased region" description="Basic residues" evidence="3">
    <location>
        <begin position="26"/>
        <end position="44"/>
    </location>
</feature>
<feature type="modified residue" description="N-acetylmethionine" evidence="2">
    <location>
        <position position="1"/>
    </location>
</feature>
<protein>
    <recommendedName>
        <fullName>Retinal rod rhodopsin-sensitive cGMP 3',5'-cyclic phosphodiesterase subunit gamma</fullName>
        <shortName>GMP-PDE gamma</shortName>
        <ecNumber>3.1.4.35</ecNumber>
    </recommendedName>
</protein>
<dbReference type="EC" id="3.1.4.35"/>
<dbReference type="EMBL" id="AF132929">
    <property type="protein sequence ID" value="AAG43274.1"/>
    <property type="molecule type" value="mRNA"/>
</dbReference>
<dbReference type="RefSeq" id="NP_001166467.1">
    <property type="nucleotide sequence ID" value="NM_001172996.1"/>
</dbReference>
<dbReference type="RefSeq" id="XP_005001441.1">
    <property type="nucleotide sequence ID" value="XM_005001384.2"/>
</dbReference>
<dbReference type="SMR" id="Q9EQQ8"/>
<dbReference type="FunCoup" id="Q9EQQ8">
    <property type="interactions" value="252"/>
</dbReference>
<dbReference type="STRING" id="10141.ENSCPOP00000018118"/>
<dbReference type="Ensembl" id="ENSCPOT00000025817.2">
    <property type="protein sequence ID" value="ENSCPOP00000018118.1"/>
    <property type="gene ID" value="ENSCPOG00000022389.2"/>
</dbReference>
<dbReference type="GeneID" id="100135595"/>
<dbReference type="KEGG" id="cpoc:100135595"/>
<dbReference type="CTD" id="5148"/>
<dbReference type="VEuPathDB" id="HostDB:ENSCPOG00000022389"/>
<dbReference type="eggNOG" id="ENOG502S20G">
    <property type="taxonomic scope" value="Eukaryota"/>
</dbReference>
<dbReference type="GeneTree" id="ENSGT00390000013260"/>
<dbReference type="HOGENOM" id="CLU_170469_0_0_1"/>
<dbReference type="InParanoid" id="Q9EQQ8"/>
<dbReference type="OMA" id="KGRGWHP"/>
<dbReference type="OrthoDB" id="8525078at2759"/>
<dbReference type="TreeFam" id="TF333297"/>
<dbReference type="Proteomes" id="UP000005447">
    <property type="component" value="Unassembled WGS sequence"/>
</dbReference>
<dbReference type="Bgee" id="ENSCPOG00000022389">
    <property type="expression patterns" value="Expressed in pituitary gland"/>
</dbReference>
<dbReference type="GO" id="GO:0042622">
    <property type="term" value="C:photoreceptor outer segment membrane"/>
    <property type="evidence" value="ECO:0007669"/>
    <property type="project" value="TreeGrafter"/>
</dbReference>
<dbReference type="GO" id="GO:0047555">
    <property type="term" value="F:3',5'-cyclic-GMP phosphodiesterase activity"/>
    <property type="evidence" value="ECO:0007669"/>
    <property type="project" value="UniProtKB-EC"/>
</dbReference>
<dbReference type="GO" id="GO:0030553">
    <property type="term" value="F:cGMP binding"/>
    <property type="evidence" value="ECO:0007669"/>
    <property type="project" value="InterPro"/>
</dbReference>
<dbReference type="GO" id="GO:0045742">
    <property type="term" value="P:positive regulation of epidermal growth factor receptor signaling pathway"/>
    <property type="evidence" value="ECO:0007669"/>
    <property type="project" value="Ensembl"/>
</dbReference>
<dbReference type="GO" id="GO:0045745">
    <property type="term" value="P:positive regulation of G protein-coupled receptor signaling pathway"/>
    <property type="evidence" value="ECO:0007669"/>
    <property type="project" value="Ensembl"/>
</dbReference>
<dbReference type="GO" id="GO:0043410">
    <property type="term" value="P:positive regulation of MAPK cascade"/>
    <property type="evidence" value="ECO:0007669"/>
    <property type="project" value="Ensembl"/>
</dbReference>
<dbReference type="GO" id="GO:0007601">
    <property type="term" value="P:visual perception"/>
    <property type="evidence" value="ECO:0007669"/>
    <property type="project" value="UniProtKB-KW"/>
</dbReference>
<dbReference type="FunFam" id="4.10.1120.10:FF:000001">
    <property type="entry name" value="retinal rod rhodopsin-sensitive cGMP 3',5'-cyclic phosphodiesterase subunit gamma"/>
    <property type="match status" value="1"/>
</dbReference>
<dbReference type="Gene3D" id="4.10.1120.10">
    <property type="entry name" value="Retinal cGMP phosphodiesterase, gamma subunit"/>
    <property type="match status" value="1"/>
</dbReference>
<dbReference type="InterPro" id="IPR006952">
    <property type="entry name" value="PDE6_gamma"/>
</dbReference>
<dbReference type="InterPro" id="IPR037030">
    <property type="entry name" value="PDE6_gamma_sf"/>
</dbReference>
<dbReference type="PANTHER" id="PTHR12122">
    <property type="entry name" value="RETINAL CONE RHODOPSIN-SENSITIVE CGMP 3',5'-CYCLIC PHOSPHODIESTERASE GAMMA-SUBUNIT-RELATED"/>
    <property type="match status" value="1"/>
</dbReference>
<dbReference type="PANTHER" id="PTHR12122:SF4">
    <property type="entry name" value="RETINAL ROD RHODOPSIN-SENSITIVE CGMP 3',5'-CYCLIC PHOSPHODIESTERASE SUBUNIT GAMMA"/>
    <property type="match status" value="1"/>
</dbReference>
<dbReference type="Pfam" id="PF04868">
    <property type="entry name" value="PDE6_gamma"/>
    <property type="match status" value="1"/>
</dbReference>
<dbReference type="PIRSF" id="PIRSF000969">
    <property type="entry name" value="35-cGMP_Pdiase_g"/>
    <property type="match status" value="1"/>
</dbReference>